<protein>
    <recommendedName>
        <fullName evidence="1">tRNA dimethylallyltransferase</fullName>
        <ecNumber evidence="1">2.5.1.75</ecNumber>
    </recommendedName>
    <alternativeName>
        <fullName evidence="1">Dimethylallyl diphosphate:tRNA dimethylallyltransferase</fullName>
        <shortName evidence="1">DMAPP:tRNA dimethylallyltransferase</shortName>
        <shortName evidence="1">DMATase</shortName>
    </alternativeName>
    <alternativeName>
        <fullName evidence="1">Isopentenyl-diphosphate:tRNA isopentenyltransferase</fullName>
        <shortName evidence="1">IPP transferase</shortName>
        <shortName evidence="1">IPPT</shortName>
        <shortName evidence="1">IPTase</shortName>
    </alternativeName>
</protein>
<keyword id="KW-0067">ATP-binding</keyword>
<keyword id="KW-0460">Magnesium</keyword>
<keyword id="KW-0547">Nucleotide-binding</keyword>
<keyword id="KW-0808">Transferase</keyword>
<keyword id="KW-0819">tRNA processing</keyword>
<proteinExistence type="inferred from homology"/>
<feature type="chain" id="PRO_0000377268" description="tRNA dimethylallyltransferase">
    <location>
        <begin position="1"/>
        <end position="309"/>
    </location>
</feature>
<feature type="region of interest" description="Interaction with substrate tRNA" evidence="1">
    <location>
        <begin position="40"/>
        <end position="43"/>
    </location>
</feature>
<feature type="binding site" evidence="1">
    <location>
        <begin position="15"/>
        <end position="22"/>
    </location>
    <ligand>
        <name>ATP</name>
        <dbReference type="ChEBI" id="CHEBI:30616"/>
    </ligand>
</feature>
<feature type="binding site" evidence="1">
    <location>
        <begin position="17"/>
        <end position="22"/>
    </location>
    <ligand>
        <name>substrate</name>
    </ligand>
</feature>
<feature type="site" description="Interaction with substrate tRNA" evidence="1">
    <location>
        <position position="106"/>
    </location>
</feature>
<feature type="site" description="Interaction with substrate tRNA" evidence="1">
    <location>
        <position position="128"/>
    </location>
</feature>
<gene>
    <name evidence="1" type="primary">miaA</name>
    <name type="ordered locus">Cvib_0776</name>
</gene>
<reference key="1">
    <citation type="submission" date="2007-03" db="EMBL/GenBank/DDBJ databases">
        <title>Complete sequence of Prosthecochloris vibrioformis DSM 265.</title>
        <authorList>
            <consortium name="US DOE Joint Genome Institute"/>
            <person name="Copeland A."/>
            <person name="Lucas S."/>
            <person name="Lapidus A."/>
            <person name="Barry K."/>
            <person name="Detter J.C."/>
            <person name="Glavina del Rio T."/>
            <person name="Hammon N."/>
            <person name="Israni S."/>
            <person name="Pitluck S."/>
            <person name="Schmutz J."/>
            <person name="Larimer F."/>
            <person name="Land M."/>
            <person name="Hauser L."/>
            <person name="Mikhailova N."/>
            <person name="Li T."/>
            <person name="Overmann J."/>
            <person name="Schuster S.C."/>
            <person name="Bryant D.A."/>
            <person name="Richardson P."/>
        </authorList>
    </citation>
    <scope>NUCLEOTIDE SEQUENCE [LARGE SCALE GENOMIC DNA]</scope>
    <source>
        <strain>DSM 265 / 1930</strain>
    </source>
</reference>
<dbReference type="EC" id="2.5.1.75" evidence="1"/>
<dbReference type="EMBL" id="CP000607">
    <property type="protein sequence ID" value="ABP36791.1"/>
    <property type="molecule type" value="Genomic_DNA"/>
</dbReference>
<dbReference type="SMR" id="A4SE82"/>
<dbReference type="STRING" id="290318.Cvib_0776"/>
<dbReference type="KEGG" id="pvi:Cvib_0776"/>
<dbReference type="eggNOG" id="COG0324">
    <property type="taxonomic scope" value="Bacteria"/>
</dbReference>
<dbReference type="HOGENOM" id="CLU_032616_0_1_10"/>
<dbReference type="OrthoDB" id="9776390at2"/>
<dbReference type="GO" id="GO:0005524">
    <property type="term" value="F:ATP binding"/>
    <property type="evidence" value="ECO:0007669"/>
    <property type="project" value="UniProtKB-UniRule"/>
</dbReference>
<dbReference type="GO" id="GO:0052381">
    <property type="term" value="F:tRNA dimethylallyltransferase activity"/>
    <property type="evidence" value="ECO:0007669"/>
    <property type="project" value="UniProtKB-UniRule"/>
</dbReference>
<dbReference type="GO" id="GO:0006400">
    <property type="term" value="P:tRNA modification"/>
    <property type="evidence" value="ECO:0007669"/>
    <property type="project" value="TreeGrafter"/>
</dbReference>
<dbReference type="Gene3D" id="1.10.20.140">
    <property type="match status" value="1"/>
</dbReference>
<dbReference type="Gene3D" id="3.40.50.300">
    <property type="entry name" value="P-loop containing nucleotide triphosphate hydrolases"/>
    <property type="match status" value="1"/>
</dbReference>
<dbReference type="HAMAP" id="MF_00185">
    <property type="entry name" value="IPP_trans"/>
    <property type="match status" value="1"/>
</dbReference>
<dbReference type="InterPro" id="IPR039657">
    <property type="entry name" value="Dimethylallyltransferase"/>
</dbReference>
<dbReference type="InterPro" id="IPR018022">
    <property type="entry name" value="IPT"/>
</dbReference>
<dbReference type="InterPro" id="IPR027417">
    <property type="entry name" value="P-loop_NTPase"/>
</dbReference>
<dbReference type="NCBIfam" id="TIGR00174">
    <property type="entry name" value="miaA"/>
    <property type="match status" value="1"/>
</dbReference>
<dbReference type="PANTHER" id="PTHR11088">
    <property type="entry name" value="TRNA DIMETHYLALLYLTRANSFERASE"/>
    <property type="match status" value="1"/>
</dbReference>
<dbReference type="PANTHER" id="PTHR11088:SF60">
    <property type="entry name" value="TRNA DIMETHYLALLYLTRANSFERASE"/>
    <property type="match status" value="1"/>
</dbReference>
<dbReference type="Pfam" id="PF01715">
    <property type="entry name" value="IPPT"/>
    <property type="match status" value="1"/>
</dbReference>
<dbReference type="SUPFAM" id="SSF52540">
    <property type="entry name" value="P-loop containing nucleoside triphosphate hydrolases"/>
    <property type="match status" value="2"/>
</dbReference>
<sequence>MPAKTKEPVALVITGPTASGKSALAHEVALRTGAEIISADSRQIYRELTIGSAKPTPEMLGEVPYHFINEKTIGEPYSSGAFATESRARIAMIRKRGNPVIVAGGSPLYLQGLIEGFSDLPPADPKIREKLQKELAEQGSRALYRKLQDLDPERAATLDHTKTHRLIRNLEIIELIGKSSKPPSPTPEMQFHAVALNFPREELYQRINLRVEEMMSEGLLQEAEALLKKYRPEISNRTLPALLTVGYQELFDHLERKTPLEGAVTLIQQHTRNYAKRQLTFLRNRMQLNWIQAPLTAQERTELAESLLS</sequence>
<comment type="function">
    <text evidence="1">Catalyzes the transfer of a dimethylallyl group onto the adenine at position 37 in tRNAs that read codons beginning with uridine, leading to the formation of N6-(dimethylallyl)adenosine (i(6)A).</text>
</comment>
<comment type="catalytic activity">
    <reaction evidence="1">
        <text>adenosine(37) in tRNA + dimethylallyl diphosphate = N(6)-dimethylallyladenosine(37) in tRNA + diphosphate</text>
        <dbReference type="Rhea" id="RHEA:26482"/>
        <dbReference type="Rhea" id="RHEA-COMP:10162"/>
        <dbReference type="Rhea" id="RHEA-COMP:10375"/>
        <dbReference type="ChEBI" id="CHEBI:33019"/>
        <dbReference type="ChEBI" id="CHEBI:57623"/>
        <dbReference type="ChEBI" id="CHEBI:74411"/>
        <dbReference type="ChEBI" id="CHEBI:74415"/>
        <dbReference type="EC" id="2.5.1.75"/>
    </reaction>
</comment>
<comment type="cofactor">
    <cofactor evidence="1">
        <name>Mg(2+)</name>
        <dbReference type="ChEBI" id="CHEBI:18420"/>
    </cofactor>
</comment>
<comment type="subunit">
    <text evidence="1">Monomer.</text>
</comment>
<comment type="similarity">
    <text evidence="1">Belongs to the IPP transferase family.</text>
</comment>
<organism>
    <name type="scientific">Chlorobium phaeovibrioides (strain DSM 265 / 1930)</name>
    <name type="common">Prosthecochloris vibrioformis (strain DSM 265)</name>
    <dbReference type="NCBI Taxonomy" id="290318"/>
    <lineage>
        <taxon>Bacteria</taxon>
        <taxon>Pseudomonadati</taxon>
        <taxon>Chlorobiota</taxon>
        <taxon>Chlorobiia</taxon>
        <taxon>Chlorobiales</taxon>
        <taxon>Chlorobiaceae</taxon>
        <taxon>Chlorobium/Pelodictyon group</taxon>
        <taxon>Chlorobium</taxon>
    </lineage>
</organism>
<evidence type="ECO:0000255" key="1">
    <source>
        <dbReference type="HAMAP-Rule" id="MF_00185"/>
    </source>
</evidence>
<name>MIAA_CHLPM</name>
<accession>A4SE82</accession>